<comment type="function">
    <text evidence="1">Functions by promoting the formation of the first peptide bond.</text>
</comment>
<comment type="subcellular location">
    <subcellularLocation>
        <location evidence="1">Cytoplasm</location>
    </subcellularLocation>
</comment>
<comment type="similarity">
    <text evidence="1">Belongs to the eIF-5A family.</text>
</comment>
<keyword id="KW-0963">Cytoplasm</keyword>
<keyword id="KW-0385">Hypusine</keyword>
<keyword id="KW-0396">Initiation factor</keyword>
<keyword id="KW-0648">Protein biosynthesis</keyword>
<sequence>MSTKVVEIKTLKVGKYIVLGGEASKITSLTTSSPGKHGAAKARLEAVGIFDNQKRSIVKPVDTKVDIPIIDKRVGQVLSIQGNNVQLMDMENYDTLDLPMPEELKDQITEGIEVDYIVALGNMKIMRTK</sequence>
<feature type="chain" id="PRO_1000007913" description="Translation initiation factor 5A">
    <location>
        <begin position="1"/>
        <end position="129"/>
    </location>
</feature>
<feature type="modified residue" description="Hypusine" evidence="1">
    <location>
        <position position="36"/>
    </location>
</feature>
<dbReference type="EMBL" id="CP000678">
    <property type="protein sequence ID" value="ABQ87082.1"/>
    <property type="molecule type" value="Genomic_DNA"/>
</dbReference>
<dbReference type="RefSeq" id="WP_004033052.1">
    <property type="nucleotide sequence ID" value="NZ_CP117965.1"/>
</dbReference>
<dbReference type="SMR" id="A5ULK4"/>
<dbReference type="STRING" id="420247.Msm_0877"/>
<dbReference type="EnsemblBacteria" id="ABQ87082">
    <property type="protein sequence ID" value="ABQ87082"/>
    <property type="gene ID" value="Msm_0877"/>
</dbReference>
<dbReference type="KEGG" id="msi:Msm_0877"/>
<dbReference type="PATRIC" id="fig|420247.28.peg.874"/>
<dbReference type="eggNOG" id="arCOG04277">
    <property type="taxonomic scope" value="Archaea"/>
</dbReference>
<dbReference type="HOGENOM" id="CLU_102600_3_0_2"/>
<dbReference type="Proteomes" id="UP000001992">
    <property type="component" value="Chromosome"/>
</dbReference>
<dbReference type="GO" id="GO:0005737">
    <property type="term" value="C:cytoplasm"/>
    <property type="evidence" value="ECO:0007669"/>
    <property type="project" value="UniProtKB-SubCell"/>
</dbReference>
<dbReference type="GO" id="GO:0043022">
    <property type="term" value="F:ribosome binding"/>
    <property type="evidence" value="ECO:0007669"/>
    <property type="project" value="InterPro"/>
</dbReference>
<dbReference type="GO" id="GO:0003723">
    <property type="term" value="F:RNA binding"/>
    <property type="evidence" value="ECO:0007669"/>
    <property type="project" value="InterPro"/>
</dbReference>
<dbReference type="GO" id="GO:0003746">
    <property type="term" value="F:translation elongation factor activity"/>
    <property type="evidence" value="ECO:0007669"/>
    <property type="project" value="InterPro"/>
</dbReference>
<dbReference type="GO" id="GO:0003743">
    <property type="term" value="F:translation initiation factor activity"/>
    <property type="evidence" value="ECO:0007669"/>
    <property type="project" value="UniProtKB-UniRule"/>
</dbReference>
<dbReference type="GO" id="GO:0045901">
    <property type="term" value="P:positive regulation of translational elongation"/>
    <property type="evidence" value="ECO:0007669"/>
    <property type="project" value="InterPro"/>
</dbReference>
<dbReference type="GO" id="GO:0045905">
    <property type="term" value="P:positive regulation of translational termination"/>
    <property type="evidence" value="ECO:0007669"/>
    <property type="project" value="InterPro"/>
</dbReference>
<dbReference type="CDD" id="cd04467">
    <property type="entry name" value="S1_aIF5A"/>
    <property type="match status" value="1"/>
</dbReference>
<dbReference type="Gene3D" id="2.30.30.30">
    <property type="match status" value="1"/>
</dbReference>
<dbReference type="Gene3D" id="2.40.50.140">
    <property type="entry name" value="Nucleic acid-binding proteins"/>
    <property type="match status" value="1"/>
</dbReference>
<dbReference type="HAMAP" id="MF_00085">
    <property type="entry name" value="eIF_5A"/>
    <property type="match status" value="1"/>
</dbReference>
<dbReference type="InterPro" id="IPR001884">
    <property type="entry name" value="IF5A-like"/>
</dbReference>
<dbReference type="InterPro" id="IPR048670">
    <property type="entry name" value="IF5A-like_N"/>
</dbReference>
<dbReference type="InterPro" id="IPR012340">
    <property type="entry name" value="NA-bd_OB-fold"/>
</dbReference>
<dbReference type="InterPro" id="IPR014722">
    <property type="entry name" value="Rib_uL2_dom2"/>
</dbReference>
<dbReference type="InterPro" id="IPR019769">
    <property type="entry name" value="Trans_elong_IF5A_hypusine_site"/>
</dbReference>
<dbReference type="InterPro" id="IPR022847">
    <property type="entry name" value="Transl_elong_IF5A_arc"/>
</dbReference>
<dbReference type="InterPro" id="IPR020189">
    <property type="entry name" value="Transl_elong_IF5A_C"/>
</dbReference>
<dbReference type="InterPro" id="IPR008991">
    <property type="entry name" value="Translation_prot_SH3-like_sf"/>
</dbReference>
<dbReference type="NCBIfam" id="TIGR00037">
    <property type="entry name" value="eIF_5A"/>
    <property type="match status" value="1"/>
</dbReference>
<dbReference type="NCBIfam" id="NF003076">
    <property type="entry name" value="PRK03999.1"/>
    <property type="match status" value="1"/>
</dbReference>
<dbReference type="PANTHER" id="PTHR11673">
    <property type="entry name" value="TRANSLATION INITIATION FACTOR 5A FAMILY MEMBER"/>
    <property type="match status" value="1"/>
</dbReference>
<dbReference type="Pfam" id="PF01287">
    <property type="entry name" value="eIF-5a"/>
    <property type="match status" value="1"/>
</dbReference>
<dbReference type="Pfam" id="PF21485">
    <property type="entry name" value="IF5A-like_N"/>
    <property type="match status" value="1"/>
</dbReference>
<dbReference type="PIRSF" id="PIRSF003025">
    <property type="entry name" value="eIF5A"/>
    <property type="match status" value="1"/>
</dbReference>
<dbReference type="SMART" id="SM01376">
    <property type="entry name" value="eIF-5a"/>
    <property type="match status" value="1"/>
</dbReference>
<dbReference type="SUPFAM" id="SSF50249">
    <property type="entry name" value="Nucleic acid-binding proteins"/>
    <property type="match status" value="1"/>
</dbReference>
<dbReference type="SUPFAM" id="SSF50104">
    <property type="entry name" value="Translation proteins SH3-like domain"/>
    <property type="match status" value="1"/>
</dbReference>
<dbReference type="PROSITE" id="PS00302">
    <property type="entry name" value="IF5A_HYPUSINE"/>
    <property type="match status" value="1"/>
</dbReference>
<organism>
    <name type="scientific">Methanobrevibacter smithii (strain ATCC 35061 / DSM 861 / OCM 144 / PS)</name>
    <dbReference type="NCBI Taxonomy" id="420247"/>
    <lineage>
        <taxon>Archaea</taxon>
        <taxon>Methanobacteriati</taxon>
        <taxon>Methanobacteriota</taxon>
        <taxon>Methanomada group</taxon>
        <taxon>Methanobacteria</taxon>
        <taxon>Methanobacteriales</taxon>
        <taxon>Methanobacteriaceae</taxon>
        <taxon>Methanobrevibacter</taxon>
    </lineage>
</organism>
<name>IF5A_METS3</name>
<gene>
    <name type="primary">eIF5A</name>
    <name type="ordered locus">Msm_0877</name>
</gene>
<protein>
    <recommendedName>
        <fullName evidence="1">Translation initiation factor 5A</fullName>
    </recommendedName>
    <alternativeName>
        <fullName evidence="1">Hypusine-containing protein</fullName>
    </alternativeName>
    <alternativeName>
        <fullName evidence="1">eIF-5A</fullName>
    </alternativeName>
</protein>
<evidence type="ECO:0000255" key="1">
    <source>
        <dbReference type="HAMAP-Rule" id="MF_00085"/>
    </source>
</evidence>
<accession>A5ULK4</accession>
<reference key="1">
    <citation type="journal article" date="2007" name="Proc. Natl. Acad. Sci. U.S.A.">
        <title>Genomic and metabolic adaptations of Methanobrevibacter smithii to the human gut.</title>
        <authorList>
            <person name="Samuel B.S."/>
            <person name="Hansen E.E."/>
            <person name="Manchester J.K."/>
            <person name="Coutinho P.M."/>
            <person name="Henrissat B."/>
            <person name="Fulton R."/>
            <person name="Latreille P."/>
            <person name="Kim K."/>
            <person name="Wilson R.K."/>
            <person name="Gordon J.I."/>
        </authorList>
    </citation>
    <scope>NUCLEOTIDE SEQUENCE [LARGE SCALE GENOMIC DNA]</scope>
    <source>
        <strain>ATCC 35061 / DSM 861 / OCM 144 / PS</strain>
    </source>
</reference>
<proteinExistence type="inferred from homology"/>